<protein>
    <recommendedName>
        <fullName evidence="1">Argininosuccinate lyase</fullName>
        <shortName evidence="1">ASAL</shortName>
        <ecNumber evidence="1">4.3.2.1</ecNumber>
    </recommendedName>
    <alternativeName>
        <fullName evidence="1">Arginosuccinase</fullName>
    </alternativeName>
</protein>
<dbReference type="EC" id="4.3.2.1" evidence="1"/>
<dbReference type="EMBL" id="CP000526">
    <property type="protein sequence ID" value="ABM52554.1"/>
    <property type="molecule type" value="Genomic_DNA"/>
</dbReference>
<dbReference type="RefSeq" id="WP_004191886.1">
    <property type="nucleotide sequence ID" value="NC_008785.1"/>
</dbReference>
<dbReference type="SMR" id="A1V5V1"/>
<dbReference type="GeneID" id="93059506"/>
<dbReference type="KEGG" id="bmv:BMASAVP1_A2295"/>
<dbReference type="HOGENOM" id="CLU_027272_2_3_4"/>
<dbReference type="UniPathway" id="UPA00068">
    <property type="reaction ID" value="UER00114"/>
</dbReference>
<dbReference type="GO" id="GO:0005829">
    <property type="term" value="C:cytosol"/>
    <property type="evidence" value="ECO:0007669"/>
    <property type="project" value="TreeGrafter"/>
</dbReference>
<dbReference type="GO" id="GO:0004056">
    <property type="term" value="F:argininosuccinate lyase activity"/>
    <property type="evidence" value="ECO:0007669"/>
    <property type="project" value="UniProtKB-UniRule"/>
</dbReference>
<dbReference type="GO" id="GO:0042450">
    <property type="term" value="P:arginine biosynthetic process via ornithine"/>
    <property type="evidence" value="ECO:0007669"/>
    <property type="project" value="InterPro"/>
</dbReference>
<dbReference type="GO" id="GO:0006526">
    <property type="term" value="P:L-arginine biosynthetic process"/>
    <property type="evidence" value="ECO:0007669"/>
    <property type="project" value="UniProtKB-UniRule"/>
</dbReference>
<dbReference type="CDD" id="cd01359">
    <property type="entry name" value="Argininosuccinate_lyase"/>
    <property type="match status" value="1"/>
</dbReference>
<dbReference type="FunFam" id="1.10.275.10:FF:000002">
    <property type="entry name" value="Argininosuccinate lyase"/>
    <property type="match status" value="1"/>
</dbReference>
<dbReference type="FunFam" id="1.10.40.30:FF:000001">
    <property type="entry name" value="Argininosuccinate lyase"/>
    <property type="match status" value="1"/>
</dbReference>
<dbReference type="FunFam" id="1.20.200.10:FF:000015">
    <property type="entry name" value="argininosuccinate lyase isoform X2"/>
    <property type="match status" value="1"/>
</dbReference>
<dbReference type="Gene3D" id="1.10.40.30">
    <property type="entry name" value="Fumarase/aspartase (C-terminal domain)"/>
    <property type="match status" value="1"/>
</dbReference>
<dbReference type="Gene3D" id="1.20.200.10">
    <property type="entry name" value="Fumarase/aspartase (Central domain)"/>
    <property type="match status" value="1"/>
</dbReference>
<dbReference type="Gene3D" id="1.10.275.10">
    <property type="entry name" value="Fumarase/aspartase (N-terminal domain)"/>
    <property type="match status" value="1"/>
</dbReference>
<dbReference type="HAMAP" id="MF_00006">
    <property type="entry name" value="Arg_succ_lyase"/>
    <property type="match status" value="1"/>
</dbReference>
<dbReference type="InterPro" id="IPR029419">
    <property type="entry name" value="Arg_succ_lyase_C"/>
</dbReference>
<dbReference type="InterPro" id="IPR009049">
    <property type="entry name" value="Argininosuccinate_lyase"/>
</dbReference>
<dbReference type="InterPro" id="IPR024083">
    <property type="entry name" value="Fumarase/histidase_N"/>
</dbReference>
<dbReference type="InterPro" id="IPR020557">
    <property type="entry name" value="Fumarate_lyase_CS"/>
</dbReference>
<dbReference type="InterPro" id="IPR000362">
    <property type="entry name" value="Fumarate_lyase_fam"/>
</dbReference>
<dbReference type="InterPro" id="IPR022761">
    <property type="entry name" value="Fumarate_lyase_N"/>
</dbReference>
<dbReference type="InterPro" id="IPR008948">
    <property type="entry name" value="L-Aspartase-like"/>
</dbReference>
<dbReference type="NCBIfam" id="TIGR00838">
    <property type="entry name" value="argH"/>
    <property type="match status" value="1"/>
</dbReference>
<dbReference type="PANTHER" id="PTHR43814">
    <property type="entry name" value="ARGININOSUCCINATE LYASE"/>
    <property type="match status" value="1"/>
</dbReference>
<dbReference type="PANTHER" id="PTHR43814:SF1">
    <property type="entry name" value="ARGININOSUCCINATE LYASE"/>
    <property type="match status" value="1"/>
</dbReference>
<dbReference type="Pfam" id="PF14698">
    <property type="entry name" value="ASL_C2"/>
    <property type="match status" value="1"/>
</dbReference>
<dbReference type="Pfam" id="PF00206">
    <property type="entry name" value="Lyase_1"/>
    <property type="match status" value="1"/>
</dbReference>
<dbReference type="PRINTS" id="PR00145">
    <property type="entry name" value="ARGSUCLYASE"/>
</dbReference>
<dbReference type="PRINTS" id="PR00149">
    <property type="entry name" value="FUMRATELYASE"/>
</dbReference>
<dbReference type="SUPFAM" id="SSF48557">
    <property type="entry name" value="L-aspartase-like"/>
    <property type="match status" value="1"/>
</dbReference>
<dbReference type="PROSITE" id="PS00163">
    <property type="entry name" value="FUMARATE_LYASES"/>
    <property type="match status" value="1"/>
</dbReference>
<proteinExistence type="inferred from homology"/>
<reference key="1">
    <citation type="journal article" date="2010" name="Genome Biol. Evol.">
        <title>Continuing evolution of Burkholderia mallei through genome reduction and large-scale rearrangements.</title>
        <authorList>
            <person name="Losada L."/>
            <person name="Ronning C.M."/>
            <person name="DeShazer D."/>
            <person name="Woods D."/>
            <person name="Fedorova N."/>
            <person name="Kim H.S."/>
            <person name="Shabalina S.A."/>
            <person name="Pearson T.R."/>
            <person name="Brinkac L."/>
            <person name="Tan P."/>
            <person name="Nandi T."/>
            <person name="Crabtree J."/>
            <person name="Badger J."/>
            <person name="Beckstrom-Sternberg S."/>
            <person name="Saqib M."/>
            <person name="Schutzer S.E."/>
            <person name="Keim P."/>
            <person name="Nierman W.C."/>
        </authorList>
    </citation>
    <scope>NUCLEOTIDE SEQUENCE [LARGE SCALE GENOMIC DNA]</scope>
    <source>
        <strain>SAVP1</strain>
    </source>
</reference>
<sequence length="469" mass="51173">MTSQLHKKGEAWSARFSEPMSELVKRYTSSVFFDKRLALVDIAGSLAHAGMLAAQKIISADDLAAIERGMAQIKGEIERGEFEWQLDLEDVHLNIEARLTALIGDAGKRLHTGRSRNDQVATDIRLWLRGEIDRIGGLLNDLRGALIDLAEQNADTILPGFTHLQVAQPVTFGHHLLAYVEMFSRDAERMRDCRARVNRLPLGAAALAGTSYPIDRHAVAKTLGFDGICANSLDAVSDRDFAIEFTAAAALVMTHVSRFSEELVLWMSPRVGFIDIADRFCTGSSIMPQKKNPDVPELARGKTGRVNGHLMALLTLMKGQPLAYNKDNQEDKEPLFDTVDTVADTLRIFAEMVAGITVKPDAMRAAALQGFSTATDLADYLVKRGLPFRDAHEAVAHAVKVCDARGIDLADLTLDEMKQELPNVAHLIGEDVFDYLTLEGSVASRNHPGGTAPDQVRAAAKAARAALGQ</sequence>
<evidence type="ECO:0000255" key="1">
    <source>
        <dbReference type="HAMAP-Rule" id="MF_00006"/>
    </source>
</evidence>
<name>ARLY_BURMS</name>
<accession>A1V5V1</accession>
<keyword id="KW-0028">Amino-acid biosynthesis</keyword>
<keyword id="KW-0055">Arginine biosynthesis</keyword>
<keyword id="KW-0963">Cytoplasm</keyword>
<keyword id="KW-0456">Lyase</keyword>
<organism>
    <name type="scientific">Burkholderia mallei (strain SAVP1)</name>
    <dbReference type="NCBI Taxonomy" id="320388"/>
    <lineage>
        <taxon>Bacteria</taxon>
        <taxon>Pseudomonadati</taxon>
        <taxon>Pseudomonadota</taxon>
        <taxon>Betaproteobacteria</taxon>
        <taxon>Burkholderiales</taxon>
        <taxon>Burkholderiaceae</taxon>
        <taxon>Burkholderia</taxon>
        <taxon>pseudomallei group</taxon>
    </lineage>
</organism>
<gene>
    <name evidence="1" type="primary">argH</name>
    <name type="ordered locus">BMASAVP1_A2295</name>
</gene>
<comment type="catalytic activity">
    <reaction evidence="1">
        <text>2-(N(omega)-L-arginino)succinate = fumarate + L-arginine</text>
        <dbReference type="Rhea" id="RHEA:24020"/>
        <dbReference type="ChEBI" id="CHEBI:29806"/>
        <dbReference type="ChEBI" id="CHEBI:32682"/>
        <dbReference type="ChEBI" id="CHEBI:57472"/>
        <dbReference type="EC" id="4.3.2.1"/>
    </reaction>
</comment>
<comment type="pathway">
    <text evidence="1">Amino-acid biosynthesis; L-arginine biosynthesis; L-arginine from L-ornithine and carbamoyl phosphate: step 3/3.</text>
</comment>
<comment type="subcellular location">
    <subcellularLocation>
        <location evidence="1">Cytoplasm</location>
    </subcellularLocation>
</comment>
<comment type="similarity">
    <text evidence="1">Belongs to the lyase 1 family. Argininosuccinate lyase subfamily.</text>
</comment>
<feature type="chain" id="PRO_1000000460" description="Argininosuccinate lyase">
    <location>
        <begin position="1"/>
        <end position="469"/>
    </location>
</feature>